<organism>
    <name type="scientific">Saccharomyces cerevisiae (strain ATCC 204508 / S288c)</name>
    <name type="common">Baker's yeast</name>
    <dbReference type="NCBI Taxonomy" id="559292"/>
    <lineage>
        <taxon>Eukaryota</taxon>
        <taxon>Fungi</taxon>
        <taxon>Dikarya</taxon>
        <taxon>Ascomycota</taxon>
        <taxon>Saccharomycotina</taxon>
        <taxon>Saccharomycetes</taxon>
        <taxon>Saccharomycetales</taxon>
        <taxon>Saccharomycetaceae</taxon>
        <taxon>Saccharomyces</taxon>
    </lineage>
</organism>
<accession>P0C270</accession>
<accession>D3DM45</accession>
<protein>
    <recommendedName>
        <fullName>Putative uncharacterized protein YER138W-A</fullName>
    </recommendedName>
</protein>
<proteinExistence type="predicted"/>
<gene>
    <name type="ordered locus">YER138W-A</name>
</gene>
<reference key="1">
    <citation type="journal article" date="1997" name="Nature">
        <title>The nucleotide sequence of Saccharomyces cerevisiae chromosome V.</title>
        <authorList>
            <person name="Dietrich F.S."/>
            <person name="Mulligan J.T."/>
            <person name="Hennessy K.M."/>
            <person name="Yelton M.A."/>
            <person name="Allen E."/>
            <person name="Araujo R."/>
            <person name="Aviles E."/>
            <person name="Berno A."/>
            <person name="Brennan T."/>
            <person name="Carpenter J."/>
            <person name="Chen E."/>
            <person name="Cherry J.M."/>
            <person name="Chung E."/>
            <person name="Duncan M."/>
            <person name="Guzman E."/>
            <person name="Hartzell G."/>
            <person name="Hunicke-Smith S."/>
            <person name="Hyman R.W."/>
            <person name="Kayser A."/>
            <person name="Komp C."/>
            <person name="Lashkari D."/>
            <person name="Lew H."/>
            <person name="Lin D."/>
            <person name="Mosedale D."/>
            <person name="Nakahara K."/>
            <person name="Namath A."/>
            <person name="Norgren R."/>
            <person name="Oefner P."/>
            <person name="Oh C."/>
            <person name="Petel F.X."/>
            <person name="Roberts D."/>
            <person name="Sehl P."/>
            <person name="Schramm S."/>
            <person name="Shogren T."/>
            <person name="Smith V."/>
            <person name="Taylor P."/>
            <person name="Wei Y."/>
            <person name="Botstein D."/>
            <person name="Davis R.W."/>
        </authorList>
    </citation>
    <scope>NUCLEOTIDE SEQUENCE [LARGE SCALE GENOMIC DNA]</scope>
    <source>
        <strain>ATCC 204508 / S288c</strain>
    </source>
</reference>
<reference key="2">
    <citation type="journal article" date="2014" name="G3 (Bethesda)">
        <title>The reference genome sequence of Saccharomyces cerevisiae: Then and now.</title>
        <authorList>
            <person name="Engel S.R."/>
            <person name="Dietrich F.S."/>
            <person name="Fisk D.G."/>
            <person name="Binkley G."/>
            <person name="Balakrishnan R."/>
            <person name="Costanzo M.C."/>
            <person name="Dwight S.S."/>
            <person name="Hitz B.C."/>
            <person name="Karra K."/>
            <person name="Nash R.S."/>
            <person name="Weng S."/>
            <person name="Wong E.D."/>
            <person name="Lloyd P."/>
            <person name="Skrzypek M.S."/>
            <person name="Miyasato S.R."/>
            <person name="Simison M."/>
            <person name="Cherry J.M."/>
        </authorList>
    </citation>
    <scope>GENOME REANNOTATION</scope>
    <source>
        <strain>ATCC 204508 / S288c</strain>
    </source>
</reference>
<name>YE38A_YEAST</name>
<sequence length="34" mass="3954">MIIIFIELCRIADSLLWIPKSSRRTSSISTYLIL</sequence>
<keyword id="KW-1185">Reference proteome</keyword>
<dbReference type="EMBL" id="U18916">
    <property type="status" value="NOT_ANNOTATED_CDS"/>
    <property type="molecule type" value="Genomic_DNA"/>
</dbReference>
<dbReference type="EMBL" id="BK006939">
    <property type="protein sequence ID" value="DAA07799.1"/>
    <property type="molecule type" value="Genomic_DNA"/>
</dbReference>
<dbReference type="RefSeq" id="NP_011065.1">
    <property type="nucleotide sequence ID" value="NM_001184332.1"/>
</dbReference>
<dbReference type="FunCoup" id="P0C270">
    <property type="interactions" value="57"/>
</dbReference>
<dbReference type="EnsemblFungi" id="YER138W-A_mRNA">
    <property type="protein sequence ID" value="YER138W-A"/>
    <property type="gene ID" value="YER138W-A"/>
</dbReference>
<dbReference type="GeneID" id="856881"/>
<dbReference type="KEGG" id="sce:YER138W-A"/>
<dbReference type="AGR" id="SGD:S000007239"/>
<dbReference type="SGD" id="S000007239">
    <property type="gene designation" value="YER138W-A"/>
</dbReference>
<dbReference type="VEuPathDB" id="FungiDB:YER138W-A"/>
<dbReference type="GeneTree" id="ENSGT00940000178779"/>
<dbReference type="HOGENOM" id="CLU_3377404_0_0_1"/>
<dbReference type="InParanoid" id="P0C270"/>
<dbReference type="OrthoDB" id="43164at4893"/>
<dbReference type="BioCyc" id="YEAST:G3O-30386-MONOMER"/>
<dbReference type="PRO" id="PR:P0C270"/>
<dbReference type="Proteomes" id="UP000002311">
    <property type="component" value="Chromosome V"/>
</dbReference>
<feature type="chain" id="PRO_0000268625" description="Putative uncharacterized protein YER138W-A">
    <location>
        <begin position="1"/>
        <end position="34"/>
    </location>
</feature>